<evidence type="ECO:0000250" key="1">
    <source>
        <dbReference type="UniProtKB" id="P17256"/>
    </source>
</evidence>
<evidence type="ECO:0000250" key="2">
    <source>
        <dbReference type="UniProtKB" id="Q03426"/>
    </source>
</evidence>
<evidence type="ECO:0000305" key="3"/>
<dbReference type="EC" id="2.7.1.36" evidence="2"/>
<dbReference type="EMBL" id="BT020832">
    <property type="protein sequence ID" value="AAX08849.1"/>
    <property type="molecule type" value="mRNA"/>
</dbReference>
<dbReference type="EMBL" id="BC104540">
    <property type="protein sequence ID" value="AAI04541.1"/>
    <property type="molecule type" value="mRNA"/>
</dbReference>
<dbReference type="RefSeq" id="NP_001015528.1">
    <property type="nucleotide sequence ID" value="NM_001015528.1"/>
</dbReference>
<dbReference type="SMR" id="Q5E9T8"/>
<dbReference type="FunCoup" id="Q5E9T8">
    <property type="interactions" value="1546"/>
</dbReference>
<dbReference type="STRING" id="9913.ENSBTAP00000006828"/>
<dbReference type="PaxDb" id="9913-ENSBTAP00000006828"/>
<dbReference type="GeneID" id="505792"/>
<dbReference type="KEGG" id="bta:505792"/>
<dbReference type="CTD" id="4598"/>
<dbReference type="VEuPathDB" id="HostDB:ENSBTAG00000005183"/>
<dbReference type="eggNOG" id="KOG1511">
    <property type="taxonomic scope" value="Eukaryota"/>
</dbReference>
<dbReference type="InParanoid" id="Q5E9T8"/>
<dbReference type="OMA" id="LMDFNHG"/>
<dbReference type="OrthoDB" id="1652964at2759"/>
<dbReference type="Reactome" id="R-BTA-191273">
    <property type="pathway name" value="Cholesterol biosynthesis"/>
</dbReference>
<dbReference type="UniPathway" id="UPA00057">
    <property type="reaction ID" value="UER00098"/>
</dbReference>
<dbReference type="Proteomes" id="UP000009136">
    <property type="component" value="Chromosome 17"/>
</dbReference>
<dbReference type="Bgee" id="ENSBTAG00000005183">
    <property type="expression patterns" value="Expressed in diaphragm and 107 other cell types or tissues"/>
</dbReference>
<dbReference type="GO" id="GO:0005829">
    <property type="term" value="C:cytosol"/>
    <property type="evidence" value="ECO:0000318"/>
    <property type="project" value="GO_Central"/>
</dbReference>
<dbReference type="GO" id="GO:0005777">
    <property type="term" value="C:peroxisome"/>
    <property type="evidence" value="ECO:0000250"/>
    <property type="project" value="UniProtKB"/>
</dbReference>
<dbReference type="GO" id="GO:0005524">
    <property type="term" value="F:ATP binding"/>
    <property type="evidence" value="ECO:0000250"/>
    <property type="project" value="UniProtKB"/>
</dbReference>
<dbReference type="GO" id="GO:0042802">
    <property type="term" value="F:identical protein binding"/>
    <property type="evidence" value="ECO:0000250"/>
    <property type="project" value="UniProtKB"/>
</dbReference>
<dbReference type="GO" id="GO:0000287">
    <property type="term" value="F:magnesium ion binding"/>
    <property type="evidence" value="ECO:0000250"/>
    <property type="project" value="UniProtKB"/>
</dbReference>
<dbReference type="GO" id="GO:0004496">
    <property type="term" value="F:mevalonate kinase activity"/>
    <property type="evidence" value="ECO:0000250"/>
    <property type="project" value="UniProtKB"/>
</dbReference>
<dbReference type="GO" id="GO:0006695">
    <property type="term" value="P:cholesterol biosynthetic process"/>
    <property type="evidence" value="ECO:0000318"/>
    <property type="project" value="GO_Central"/>
</dbReference>
<dbReference type="GO" id="GO:0019287">
    <property type="term" value="P:isopentenyl diphosphate biosynthetic process, mevalonate pathway"/>
    <property type="evidence" value="ECO:0000318"/>
    <property type="project" value="GO_Central"/>
</dbReference>
<dbReference type="FunFam" id="3.30.230.10:FF:000119">
    <property type="entry name" value="Mevalonate kinase"/>
    <property type="match status" value="1"/>
</dbReference>
<dbReference type="FunFam" id="3.30.70.890:FF:000003">
    <property type="entry name" value="Mevalonate kinase"/>
    <property type="match status" value="1"/>
</dbReference>
<dbReference type="Gene3D" id="3.30.230.10">
    <property type="match status" value="1"/>
</dbReference>
<dbReference type="Gene3D" id="3.30.70.890">
    <property type="entry name" value="GHMP kinase, C-terminal domain"/>
    <property type="match status" value="1"/>
</dbReference>
<dbReference type="InterPro" id="IPR013750">
    <property type="entry name" value="GHMP_kinase_C_dom"/>
</dbReference>
<dbReference type="InterPro" id="IPR036554">
    <property type="entry name" value="GHMP_kinase_C_sf"/>
</dbReference>
<dbReference type="InterPro" id="IPR006204">
    <property type="entry name" value="GHMP_kinase_N_dom"/>
</dbReference>
<dbReference type="InterPro" id="IPR006203">
    <property type="entry name" value="GHMP_knse_ATP-bd_CS"/>
</dbReference>
<dbReference type="InterPro" id="IPR006205">
    <property type="entry name" value="Mev_gal_kin"/>
</dbReference>
<dbReference type="InterPro" id="IPR020568">
    <property type="entry name" value="Ribosomal_Su5_D2-typ_SF"/>
</dbReference>
<dbReference type="InterPro" id="IPR014721">
    <property type="entry name" value="Ribsml_uS5_D2-typ_fold_subgr"/>
</dbReference>
<dbReference type="NCBIfam" id="TIGR00549">
    <property type="entry name" value="mevalon_kin"/>
    <property type="match status" value="1"/>
</dbReference>
<dbReference type="PANTHER" id="PTHR43290">
    <property type="entry name" value="MEVALONATE KINASE"/>
    <property type="match status" value="1"/>
</dbReference>
<dbReference type="PANTHER" id="PTHR43290:SF2">
    <property type="entry name" value="MEVALONATE KINASE"/>
    <property type="match status" value="1"/>
</dbReference>
<dbReference type="Pfam" id="PF08544">
    <property type="entry name" value="GHMP_kinases_C"/>
    <property type="match status" value="1"/>
</dbReference>
<dbReference type="Pfam" id="PF00288">
    <property type="entry name" value="GHMP_kinases_N"/>
    <property type="match status" value="1"/>
</dbReference>
<dbReference type="PRINTS" id="PR00959">
    <property type="entry name" value="MEVGALKINASE"/>
</dbReference>
<dbReference type="SUPFAM" id="SSF55060">
    <property type="entry name" value="GHMP Kinase, C-terminal domain"/>
    <property type="match status" value="1"/>
</dbReference>
<dbReference type="SUPFAM" id="SSF54211">
    <property type="entry name" value="Ribosomal protein S5 domain 2-like"/>
    <property type="match status" value="1"/>
</dbReference>
<dbReference type="PROSITE" id="PS00627">
    <property type="entry name" value="GHMP_KINASES_ATP"/>
    <property type="match status" value="1"/>
</dbReference>
<protein>
    <recommendedName>
        <fullName evidence="3">Mevalonate kinase</fullName>
        <shortName>MK</shortName>
        <ecNumber evidence="2">2.7.1.36</ecNumber>
    </recommendedName>
</protein>
<keyword id="KW-0067">ATP-binding</keyword>
<keyword id="KW-0152">Cholesterol biosynthesis</keyword>
<keyword id="KW-0153">Cholesterol metabolism</keyword>
<keyword id="KW-0963">Cytoplasm</keyword>
<keyword id="KW-0418">Kinase</keyword>
<keyword id="KW-0444">Lipid biosynthesis</keyword>
<keyword id="KW-0443">Lipid metabolism</keyword>
<keyword id="KW-0460">Magnesium</keyword>
<keyword id="KW-0479">Metal-binding</keyword>
<keyword id="KW-0547">Nucleotide-binding</keyword>
<keyword id="KW-0576">Peroxisome</keyword>
<keyword id="KW-1185">Reference proteome</keyword>
<keyword id="KW-0752">Steroid biosynthesis</keyword>
<keyword id="KW-0753">Steroid metabolism</keyword>
<keyword id="KW-0756">Sterol biosynthesis</keyword>
<keyword id="KW-1207">Sterol metabolism</keyword>
<keyword id="KW-0808">Transferase</keyword>
<accession>Q5E9T8</accession>
<reference key="1">
    <citation type="journal article" date="2005" name="BMC Genomics">
        <title>Characterization of 954 bovine full-CDS cDNA sequences.</title>
        <authorList>
            <person name="Harhay G.P."/>
            <person name="Sonstegard T.S."/>
            <person name="Keele J.W."/>
            <person name="Heaton M.P."/>
            <person name="Clawson M.L."/>
            <person name="Snelling W.M."/>
            <person name="Wiedmann R.T."/>
            <person name="Van Tassell C.P."/>
            <person name="Smith T.P.L."/>
        </authorList>
    </citation>
    <scope>NUCLEOTIDE SEQUENCE [LARGE SCALE MRNA]</scope>
</reference>
<reference key="2">
    <citation type="submission" date="2005-09" db="EMBL/GenBank/DDBJ databases">
        <authorList>
            <consortium name="NIH - Mammalian Gene Collection (MGC) project"/>
        </authorList>
    </citation>
    <scope>NUCLEOTIDE SEQUENCE [LARGE SCALE MRNA]</scope>
    <source>
        <strain>Hereford</strain>
        <tissue>Ascending colon</tissue>
    </source>
</reference>
<gene>
    <name evidence="2" type="primary">MVK</name>
</gene>
<organism>
    <name type="scientific">Bos taurus</name>
    <name type="common">Bovine</name>
    <dbReference type="NCBI Taxonomy" id="9913"/>
    <lineage>
        <taxon>Eukaryota</taxon>
        <taxon>Metazoa</taxon>
        <taxon>Chordata</taxon>
        <taxon>Craniata</taxon>
        <taxon>Vertebrata</taxon>
        <taxon>Euteleostomi</taxon>
        <taxon>Mammalia</taxon>
        <taxon>Eutheria</taxon>
        <taxon>Laurasiatheria</taxon>
        <taxon>Artiodactyla</taxon>
        <taxon>Ruminantia</taxon>
        <taxon>Pecora</taxon>
        <taxon>Bovidae</taxon>
        <taxon>Bovinae</taxon>
        <taxon>Bos</taxon>
    </lineage>
</organism>
<proteinExistence type="evidence at transcript level"/>
<feature type="chain" id="PRO_0000282963" description="Mevalonate kinase">
    <location>
        <begin position="1"/>
        <end position="396"/>
    </location>
</feature>
<feature type="active site" description="Proton donor" evidence="2">
    <location>
        <position position="146"/>
    </location>
</feature>
<feature type="active site" description="Proton acceptor" evidence="2">
    <location>
        <position position="204"/>
    </location>
</feature>
<feature type="binding site" evidence="1">
    <location>
        <position position="13"/>
    </location>
    <ligand>
        <name>ATP</name>
        <dbReference type="ChEBI" id="CHEBI:30616"/>
    </ligand>
</feature>
<feature type="binding site" evidence="1">
    <location>
        <position position="55"/>
    </location>
    <ligand>
        <name>ATP</name>
        <dbReference type="ChEBI" id="CHEBI:30616"/>
    </ligand>
</feature>
<feature type="binding site" evidence="1">
    <location>
        <position position="135"/>
    </location>
    <ligand>
        <name>ATP</name>
        <dbReference type="ChEBI" id="CHEBI:30616"/>
    </ligand>
</feature>
<feature type="binding site" evidence="1">
    <location>
        <begin position="140"/>
        <end position="146"/>
    </location>
    <ligand>
        <name>ATP</name>
        <dbReference type="ChEBI" id="CHEBI:30616"/>
    </ligand>
</feature>
<feature type="binding site" evidence="1">
    <location>
        <position position="146"/>
    </location>
    <ligand>
        <name>Mg(2+)</name>
        <dbReference type="ChEBI" id="CHEBI:18420"/>
    </ligand>
</feature>
<feature type="binding site" evidence="1">
    <location>
        <position position="193"/>
    </location>
    <ligand>
        <name>Mg(2+)</name>
        <dbReference type="ChEBI" id="CHEBI:18420"/>
    </ligand>
</feature>
<sequence length="396" mass="42070">MLSEVLLVSAPGKVILHGEHAVVHGKVALAVALNLRTFLRLQPHSNGRVGLNLPNIGVRRAWDVASLQLLDTSFLGHGDSAALTAKHVEKLKEVAGFPKDCVDPEHLAVLAFLYLYLSICQSQRALPSLDITVWSELPTGAGLGSSAAYSVCLAAALLTACEEIPNPLKDGEAAGRWTEENLELINKWAFQGERVIHGNPSGVDNAVSTWGGALRYQQGKISSLKRPPVLKILLINTKVPRSTKVLVANVRSRLLKFPEIVAPLLTSIDAISLECERVLGEMAAAPTPEHYLTLEELIDMNQHHLNALGVGHASLDQLCQVTTAHGLHSKLTGAGGGGCGITLLRPDVERPAVEATKRALSGCGFDCWETSVGAPGVSVHTAASLDASVQQGLDSL</sequence>
<name>KIME_BOVIN</name>
<comment type="function">
    <text evidence="2">Catalyzes the phosphorylation of mevalonate to mevalonate 5-phosphate, a key step in isoprenoid and cholesterol biosynthesis.</text>
</comment>
<comment type="catalytic activity">
    <reaction evidence="2">
        <text>(R)-mevalonate + ATP = (R)-5-phosphomevalonate + ADP + H(+)</text>
        <dbReference type="Rhea" id="RHEA:17065"/>
        <dbReference type="ChEBI" id="CHEBI:15378"/>
        <dbReference type="ChEBI" id="CHEBI:30616"/>
        <dbReference type="ChEBI" id="CHEBI:36464"/>
        <dbReference type="ChEBI" id="CHEBI:58146"/>
        <dbReference type="ChEBI" id="CHEBI:456216"/>
        <dbReference type="EC" id="2.7.1.36"/>
    </reaction>
</comment>
<comment type="cofactor">
    <cofactor evidence="1">
        <name>Mg(2+)</name>
        <dbReference type="ChEBI" id="CHEBI:18420"/>
    </cofactor>
</comment>
<comment type="activity regulation">
    <text evidence="2">Farnesyl pyrophosphate and geranyl pyrophosphate inhibit mevalonate kinase activity by binding competitively at the ATP-binding sites.</text>
</comment>
<comment type="pathway">
    <text>Isoprenoid biosynthesis; isopentenyl diphosphate biosynthesis via mevalonate pathway; isopentenyl diphosphate from (R)-mevalonate: step 1/3.</text>
</comment>
<comment type="subunit">
    <text evidence="2">Homodimer.</text>
</comment>
<comment type="subcellular location">
    <subcellularLocation>
        <location evidence="1">Cytoplasm</location>
    </subcellularLocation>
    <subcellularLocation>
        <location evidence="1">Peroxisome</location>
    </subcellularLocation>
</comment>
<comment type="similarity">
    <text evidence="3">Belongs to the GHMP kinase family. Mevalonate kinase subfamily.</text>
</comment>